<feature type="chain" id="PRO_0000107636" description="Acetate kinase 2">
    <location>
        <begin position="1"/>
        <end position="397"/>
    </location>
</feature>
<feature type="active site" description="Proton donor/acceptor" evidence="1">
    <location>
        <position position="147"/>
    </location>
</feature>
<feature type="binding site" evidence="1">
    <location>
        <position position="10"/>
    </location>
    <ligand>
        <name>Mg(2+)</name>
        <dbReference type="ChEBI" id="CHEBI:18420"/>
    </ligand>
</feature>
<feature type="binding site" evidence="1">
    <location>
        <position position="17"/>
    </location>
    <ligand>
        <name>ATP</name>
        <dbReference type="ChEBI" id="CHEBI:30616"/>
    </ligand>
</feature>
<feature type="binding site" evidence="1">
    <location>
        <position position="90"/>
    </location>
    <ligand>
        <name>substrate</name>
    </ligand>
</feature>
<feature type="binding site" evidence="1">
    <location>
        <begin position="207"/>
        <end position="211"/>
    </location>
    <ligand>
        <name>ATP</name>
        <dbReference type="ChEBI" id="CHEBI:30616"/>
    </ligand>
</feature>
<feature type="binding site" evidence="1">
    <location>
        <begin position="281"/>
        <end position="283"/>
    </location>
    <ligand>
        <name>ATP</name>
        <dbReference type="ChEBI" id="CHEBI:30616"/>
    </ligand>
</feature>
<feature type="binding site" evidence="1">
    <location>
        <begin position="329"/>
        <end position="333"/>
    </location>
    <ligand>
        <name>ATP</name>
        <dbReference type="ChEBI" id="CHEBI:30616"/>
    </ligand>
</feature>
<feature type="binding site" evidence="1">
    <location>
        <position position="385"/>
    </location>
    <ligand>
        <name>Mg(2+)</name>
        <dbReference type="ChEBI" id="CHEBI:18420"/>
    </ligand>
</feature>
<feature type="site" description="Transition state stabilizer" evidence="1">
    <location>
        <position position="179"/>
    </location>
</feature>
<feature type="site" description="Transition state stabilizer" evidence="1">
    <location>
        <position position="240"/>
    </location>
</feature>
<proteinExistence type="inferred from homology"/>
<reference key="1">
    <citation type="journal article" date="2000" name="Nature">
        <title>DNA sequence of both chromosomes of the cholera pathogen Vibrio cholerae.</title>
        <authorList>
            <person name="Heidelberg J.F."/>
            <person name="Eisen J.A."/>
            <person name="Nelson W.C."/>
            <person name="Clayton R.A."/>
            <person name="Gwinn M.L."/>
            <person name="Dodson R.J."/>
            <person name="Haft D.H."/>
            <person name="Hickey E.K."/>
            <person name="Peterson J.D."/>
            <person name="Umayam L.A."/>
            <person name="Gill S.R."/>
            <person name="Nelson K.E."/>
            <person name="Read T.D."/>
            <person name="Tettelin H."/>
            <person name="Richardson D.L."/>
            <person name="Ermolaeva M.D."/>
            <person name="Vamathevan J.J."/>
            <person name="Bass S."/>
            <person name="Qin H."/>
            <person name="Dragoi I."/>
            <person name="Sellers P."/>
            <person name="McDonald L.A."/>
            <person name="Utterback T.R."/>
            <person name="Fleischmann R.D."/>
            <person name="Nierman W.C."/>
            <person name="White O."/>
            <person name="Salzberg S.L."/>
            <person name="Smith H.O."/>
            <person name="Colwell R.R."/>
            <person name="Mekalanos J.J."/>
            <person name="Venter J.C."/>
            <person name="Fraser C.M."/>
        </authorList>
    </citation>
    <scope>NUCLEOTIDE SEQUENCE [LARGE SCALE GENOMIC DNA]</scope>
    <source>
        <strain>ATCC 39315 / El Tor Inaba N16961</strain>
    </source>
</reference>
<protein>
    <recommendedName>
        <fullName evidence="1">Acetate kinase 2</fullName>
        <ecNumber evidence="1">2.7.2.1</ecNumber>
    </recommendedName>
    <alternativeName>
        <fullName evidence="1">Acetokinase 2</fullName>
    </alternativeName>
</protein>
<gene>
    <name evidence="1" type="primary">ackA2</name>
    <name type="ordered locus">VC_A0235</name>
</gene>
<name>ACKA2_VIBCH</name>
<organism>
    <name type="scientific">Vibrio cholerae serotype O1 (strain ATCC 39315 / El Tor Inaba N16961)</name>
    <dbReference type="NCBI Taxonomy" id="243277"/>
    <lineage>
        <taxon>Bacteria</taxon>
        <taxon>Pseudomonadati</taxon>
        <taxon>Pseudomonadota</taxon>
        <taxon>Gammaproteobacteria</taxon>
        <taxon>Vibrionales</taxon>
        <taxon>Vibrionaceae</taxon>
        <taxon>Vibrio</taxon>
    </lineage>
</organism>
<sequence length="397" mass="42827">MSNSYVLVINSGSSSLKFAVIDSQTGEALISGLGECFGMPEAVISWKYQGEKTEEAITAADHHHQHAINRIVGLMESLGFAQDLVAVGHRIVHGGEKFTSTVRIDEEVLAEIESLSDLAPLHNPAGAIGIQAAMAAFPSLPQFAVFDTAFHQTMPKKAFTGAISHELYKQYGIRRYGFHGTSHYYVSREAAKMLNKPIEQASFISVHLGNGASVCAISNGQSVDTSMGFTPLAGLMMGTRSGDLDPGIIEFLMKKGWSQEKVFETLNKKSGFLGVSGLTSDARGILEAMENGHEGAKLAFEVFTYRVAKYIGSYLIPLDHLDAIIFTGGIGENSLPIRREILGNLKLLGFVEDEKGNEAARFGKAGIIAKSELLNAVAMVIPTNEEFVIAQQSVELL</sequence>
<comment type="function">
    <text evidence="1">Catalyzes the formation of acetyl phosphate from acetate and ATP. Can also catalyze the reverse reaction.</text>
</comment>
<comment type="catalytic activity">
    <reaction evidence="1">
        <text>acetate + ATP = acetyl phosphate + ADP</text>
        <dbReference type="Rhea" id="RHEA:11352"/>
        <dbReference type="ChEBI" id="CHEBI:22191"/>
        <dbReference type="ChEBI" id="CHEBI:30089"/>
        <dbReference type="ChEBI" id="CHEBI:30616"/>
        <dbReference type="ChEBI" id="CHEBI:456216"/>
        <dbReference type="EC" id="2.7.2.1"/>
    </reaction>
</comment>
<comment type="cofactor">
    <cofactor evidence="1">
        <name>Mg(2+)</name>
        <dbReference type="ChEBI" id="CHEBI:18420"/>
    </cofactor>
    <cofactor evidence="1">
        <name>Mn(2+)</name>
        <dbReference type="ChEBI" id="CHEBI:29035"/>
    </cofactor>
    <text evidence="1">Mg(2+). Can also accept Mn(2+).</text>
</comment>
<comment type="pathway">
    <text evidence="1">Metabolic intermediate biosynthesis; acetyl-CoA biosynthesis; acetyl-CoA from acetate: step 1/2.</text>
</comment>
<comment type="subunit">
    <text evidence="1">Homodimer.</text>
</comment>
<comment type="subcellular location">
    <subcellularLocation>
        <location evidence="1">Cytoplasm</location>
    </subcellularLocation>
</comment>
<comment type="similarity">
    <text evidence="1">Belongs to the acetokinase family.</text>
</comment>
<dbReference type="EC" id="2.7.2.1" evidence="1"/>
<dbReference type="EMBL" id="AE003853">
    <property type="protein sequence ID" value="AAF96146.1"/>
    <property type="molecule type" value="Genomic_DNA"/>
</dbReference>
<dbReference type="PIR" id="G82485">
    <property type="entry name" value="G82485"/>
</dbReference>
<dbReference type="RefSeq" id="NP_232633.1">
    <property type="nucleotide sequence ID" value="NC_002506.1"/>
</dbReference>
<dbReference type="RefSeq" id="WP_000072096.1">
    <property type="nucleotide sequence ID" value="NZ_LT906615.1"/>
</dbReference>
<dbReference type="SMR" id="Q9KMT5"/>
<dbReference type="STRING" id="243277.VC_A0235"/>
<dbReference type="DNASU" id="2612786"/>
<dbReference type="EnsemblBacteria" id="AAF96146">
    <property type="protein sequence ID" value="AAF96146"/>
    <property type="gene ID" value="VC_A0235"/>
</dbReference>
<dbReference type="KEGG" id="vch:VC_A0235"/>
<dbReference type="PATRIC" id="fig|243277.26.peg.2867"/>
<dbReference type="eggNOG" id="COG0282">
    <property type="taxonomic scope" value="Bacteria"/>
</dbReference>
<dbReference type="HOGENOM" id="CLU_020352_0_1_6"/>
<dbReference type="UniPathway" id="UPA00340">
    <property type="reaction ID" value="UER00458"/>
</dbReference>
<dbReference type="Proteomes" id="UP000000584">
    <property type="component" value="Chromosome 2"/>
</dbReference>
<dbReference type="GO" id="GO:0005829">
    <property type="term" value="C:cytosol"/>
    <property type="evidence" value="ECO:0000318"/>
    <property type="project" value="GO_Central"/>
</dbReference>
<dbReference type="GO" id="GO:0008776">
    <property type="term" value="F:acetate kinase activity"/>
    <property type="evidence" value="ECO:0000318"/>
    <property type="project" value="GO_Central"/>
</dbReference>
<dbReference type="GO" id="GO:0005524">
    <property type="term" value="F:ATP binding"/>
    <property type="evidence" value="ECO:0007669"/>
    <property type="project" value="UniProtKB-KW"/>
</dbReference>
<dbReference type="GO" id="GO:0000287">
    <property type="term" value="F:magnesium ion binding"/>
    <property type="evidence" value="ECO:0007669"/>
    <property type="project" value="UniProtKB-UniRule"/>
</dbReference>
<dbReference type="GO" id="GO:0006083">
    <property type="term" value="P:acetate metabolic process"/>
    <property type="evidence" value="ECO:0000318"/>
    <property type="project" value="GO_Central"/>
</dbReference>
<dbReference type="GO" id="GO:0006085">
    <property type="term" value="P:acetyl-CoA biosynthetic process"/>
    <property type="evidence" value="ECO:0007669"/>
    <property type="project" value="UniProtKB-UniRule"/>
</dbReference>
<dbReference type="CDD" id="cd24010">
    <property type="entry name" value="ASKHA_NBD_AcK_PK"/>
    <property type="match status" value="1"/>
</dbReference>
<dbReference type="FunFam" id="3.30.420.40:FF:000041">
    <property type="entry name" value="Acetate kinase"/>
    <property type="match status" value="1"/>
</dbReference>
<dbReference type="FunFam" id="3.30.420.40:FF:000042">
    <property type="entry name" value="Acetate kinase"/>
    <property type="match status" value="1"/>
</dbReference>
<dbReference type="Gene3D" id="3.30.420.40">
    <property type="match status" value="2"/>
</dbReference>
<dbReference type="HAMAP" id="MF_00020">
    <property type="entry name" value="Acetate_kinase"/>
    <property type="match status" value="1"/>
</dbReference>
<dbReference type="InterPro" id="IPR004372">
    <property type="entry name" value="Ac/propionate_kinase"/>
</dbReference>
<dbReference type="InterPro" id="IPR000890">
    <property type="entry name" value="Aliphatic_acid_kin_short-chain"/>
</dbReference>
<dbReference type="InterPro" id="IPR023865">
    <property type="entry name" value="Aliphatic_acid_kinase_CS"/>
</dbReference>
<dbReference type="InterPro" id="IPR043129">
    <property type="entry name" value="ATPase_NBD"/>
</dbReference>
<dbReference type="NCBIfam" id="TIGR00016">
    <property type="entry name" value="ackA"/>
    <property type="match status" value="1"/>
</dbReference>
<dbReference type="NCBIfam" id="NF009099">
    <property type="entry name" value="PRK12440.1"/>
    <property type="match status" value="1"/>
</dbReference>
<dbReference type="PANTHER" id="PTHR21060">
    <property type="entry name" value="ACETATE KINASE"/>
    <property type="match status" value="1"/>
</dbReference>
<dbReference type="PANTHER" id="PTHR21060:SF21">
    <property type="entry name" value="ACETATE KINASE"/>
    <property type="match status" value="1"/>
</dbReference>
<dbReference type="Pfam" id="PF00871">
    <property type="entry name" value="Acetate_kinase"/>
    <property type="match status" value="1"/>
</dbReference>
<dbReference type="PIRSF" id="PIRSF000722">
    <property type="entry name" value="Acetate_prop_kin"/>
    <property type="match status" value="1"/>
</dbReference>
<dbReference type="PRINTS" id="PR00471">
    <property type="entry name" value="ACETATEKNASE"/>
</dbReference>
<dbReference type="SUPFAM" id="SSF53067">
    <property type="entry name" value="Actin-like ATPase domain"/>
    <property type="match status" value="2"/>
</dbReference>
<dbReference type="PROSITE" id="PS01075">
    <property type="entry name" value="ACETATE_KINASE_1"/>
    <property type="match status" value="1"/>
</dbReference>
<dbReference type="PROSITE" id="PS01076">
    <property type="entry name" value="ACETATE_KINASE_2"/>
    <property type="match status" value="1"/>
</dbReference>
<evidence type="ECO:0000255" key="1">
    <source>
        <dbReference type="HAMAP-Rule" id="MF_00020"/>
    </source>
</evidence>
<keyword id="KW-0067">ATP-binding</keyword>
<keyword id="KW-0963">Cytoplasm</keyword>
<keyword id="KW-0418">Kinase</keyword>
<keyword id="KW-0460">Magnesium</keyword>
<keyword id="KW-0479">Metal-binding</keyword>
<keyword id="KW-0547">Nucleotide-binding</keyword>
<keyword id="KW-1185">Reference proteome</keyword>
<keyword id="KW-0808">Transferase</keyword>
<accession>Q9KMT5</accession>